<gene>
    <name evidence="1" type="primary">rsmJ</name>
    <name type="ordered locus">VIBHAR_00529</name>
</gene>
<keyword id="KW-0963">Cytoplasm</keyword>
<keyword id="KW-0489">Methyltransferase</keyword>
<keyword id="KW-0698">rRNA processing</keyword>
<keyword id="KW-0949">S-adenosyl-L-methionine</keyword>
<keyword id="KW-0808">Transferase</keyword>
<organism>
    <name type="scientific">Vibrio campbellii (strain ATCC BAA-1116)</name>
    <dbReference type="NCBI Taxonomy" id="2902295"/>
    <lineage>
        <taxon>Bacteria</taxon>
        <taxon>Pseudomonadati</taxon>
        <taxon>Pseudomonadota</taxon>
        <taxon>Gammaproteobacteria</taxon>
        <taxon>Vibrionales</taxon>
        <taxon>Vibrionaceae</taxon>
        <taxon>Vibrio</taxon>
    </lineage>
</organism>
<accession>A7MU00</accession>
<name>RSMJ_VIBC1</name>
<evidence type="ECO:0000255" key="1">
    <source>
        <dbReference type="HAMAP-Rule" id="MF_01523"/>
    </source>
</evidence>
<reference key="1">
    <citation type="submission" date="2007-08" db="EMBL/GenBank/DDBJ databases">
        <authorList>
            <consortium name="The Vibrio harveyi Genome Sequencing Project"/>
            <person name="Bassler B."/>
            <person name="Clifton S.W."/>
            <person name="Fulton L."/>
            <person name="Delehaunty K."/>
            <person name="Fronick C."/>
            <person name="Harrison M."/>
            <person name="Markivic C."/>
            <person name="Fulton R."/>
            <person name="Tin-Wollam A.-M."/>
            <person name="Shah N."/>
            <person name="Pepin K."/>
            <person name="Nash W."/>
            <person name="Thiruvilangam P."/>
            <person name="Bhonagiri V."/>
            <person name="Waters C."/>
            <person name="Tu K.C."/>
            <person name="Irgon J."/>
            <person name="Wilson R.K."/>
        </authorList>
    </citation>
    <scope>NUCLEOTIDE SEQUENCE [LARGE SCALE GENOMIC DNA]</scope>
    <source>
        <strain>ATCC BAA-1116 / BB120</strain>
    </source>
</reference>
<feature type="chain" id="PRO_0000316264" description="Ribosomal RNA small subunit methyltransferase J">
    <location>
        <begin position="1"/>
        <end position="259"/>
    </location>
</feature>
<feature type="binding site" evidence="1">
    <location>
        <begin position="101"/>
        <end position="102"/>
    </location>
    <ligand>
        <name>S-adenosyl-L-methionine</name>
        <dbReference type="ChEBI" id="CHEBI:59789"/>
    </ligand>
</feature>
<feature type="binding site" evidence="1">
    <location>
        <begin position="117"/>
        <end position="118"/>
    </location>
    <ligand>
        <name>S-adenosyl-L-methionine</name>
        <dbReference type="ChEBI" id="CHEBI:59789"/>
    </ligand>
</feature>
<feature type="binding site" evidence="1">
    <location>
        <begin position="153"/>
        <end position="154"/>
    </location>
    <ligand>
        <name>S-adenosyl-L-methionine</name>
        <dbReference type="ChEBI" id="CHEBI:59789"/>
    </ligand>
</feature>
<feature type="binding site" evidence="1">
    <location>
        <position position="176"/>
    </location>
    <ligand>
        <name>S-adenosyl-L-methionine</name>
        <dbReference type="ChEBI" id="CHEBI:59789"/>
    </ligand>
</feature>
<comment type="function">
    <text evidence="1">Specifically methylates the guanosine in position 1516 of 16S rRNA.</text>
</comment>
<comment type="catalytic activity">
    <reaction evidence="1">
        <text>guanosine(1516) in 16S rRNA + S-adenosyl-L-methionine = N(2)-methylguanosine(1516) in 16S rRNA + S-adenosyl-L-homocysteine + H(+)</text>
        <dbReference type="Rhea" id="RHEA:43220"/>
        <dbReference type="Rhea" id="RHEA-COMP:10412"/>
        <dbReference type="Rhea" id="RHEA-COMP:10413"/>
        <dbReference type="ChEBI" id="CHEBI:15378"/>
        <dbReference type="ChEBI" id="CHEBI:57856"/>
        <dbReference type="ChEBI" id="CHEBI:59789"/>
        <dbReference type="ChEBI" id="CHEBI:74269"/>
        <dbReference type="ChEBI" id="CHEBI:74481"/>
        <dbReference type="EC" id="2.1.1.242"/>
    </reaction>
</comment>
<comment type="subcellular location">
    <subcellularLocation>
        <location evidence="1">Cytoplasm</location>
    </subcellularLocation>
</comment>
<comment type="similarity">
    <text evidence="1">Belongs to the methyltransferase superfamily. RsmJ family.</text>
</comment>
<protein>
    <recommendedName>
        <fullName evidence="1">Ribosomal RNA small subunit methyltransferase J</fullName>
        <ecNumber evidence="1">2.1.1.242</ecNumber>
    </recommendedName>
    <alternativeName>
        <fullName evidence="1">16S rRNA m2G1516 methyltransferase</fullName>
    </alternativeName>
    <alternativeName>
        <fullName evidence="1">rRNA (guanine-N(2)-)-methyltransferase</fullName>
    </alternativeName>
</protein>
<sequence>MQLQLICEDPSQQSHLDELAARWQLSHTDDSDFALVLTTERLELRKVDEPKLGAIFVDLIGGAVGHRRKFGGGKGQAIAKAAGLNKGATPTVLDGTAGLGRDAFVLASLGCKVQMVERHPVVAALLDDGLARAKHDPEIGTWVSERMSLIHASSHDALEQLAQDKDFLQPDVVYLDPMYPHPENKKKSALVKKEMRVFQSLVGADLDADGLLAPAMALASKRVVVKRPDYADWLDEQKPSMAIETKKNRFDVYVKASMA</sequence>
<proteinExistence type="inferred from homology"/>
<dbReference type="EC" id="2.1.1.242" evidence="1"/>
<dbReference type="EMBL" id="CP000789">
    <property type="protein sequence ID" value="ABU69532.1"/>
    <property type="molecule type" value="Genomic_DNA"/>
</dbReference>
<dbReference type="RefSeq" id="WP_012126721.1">
    <property type="nucleotide sequence ID" value="NC_022269.1"/>
</dbReference>
<dbReference type="SMR" id="A7MU00"/>
<dbReference type="KEGG" id="vha:VIBHAR_00529"/>
<dbReference type="PATRIC" id="fig|338187.25.peg.2081"/>
<dbReference type="Proteomes" id="UP000008152">
    <property type="component" value="Chromosome I"/>
</dbReference>
<dbReference type="GO" id="GO:0005737">
    <property type="term" value="C:cytoplasm"/>
    <property type="evidence" value="ECO:0007669"/>
    <property type="project" value="UniProtKB-SubCell"/>
</dbReference>
<dbReference type="GO" id="GO:0008990">
    <property type="term" value="F:rRNA (guanine-N2-)-methyltransferase activity"/>
    <property type="evidence" value="ECO:0007669"/>
    <property type="project" value="UniProtKB-UniRule"/>
</dbReference>
<dbReference type="CDD" id="cd02440">
    <property type="entry name" value="AdoMet_MTases"/>
    <property type="match status" value="1"/>
</dbReference>
<dbReference type="Gene3D" id="3.40.50.150">
    <property type="entry name" value="Vaccinia Virus protein VP39"/>
    <property type="match status" value="1"/>
</dbReference>
<dbReference type="Gene3D" id="3.40.1630.10">
    <property type="entry name" value="YhiQ-like domain"/>
    <property type="match status" value="1"/>
</dbReference>
<dbReference type="HAMAP" id="MF_01523">
    <property type="entry name" value="16SrRNA_methyltr_J"/>
    <property type="match status" value="1"/>
</dbReference>
<dbReference type="InterPro" id="IPR007536">
    <property type="entry name" value="16SrRNA_methylTrfase_J"/>
</dbReference>
<dbReference type="InterPro" id="IPR029063">
    <property type="entry name" value="SAM-dependent_MTases_sf"/>
</dbReference>
<dbReference type="PANTHER" id="PTHR36112">
    <property type="entry name" value="RIBOSOMAL RNA SMALL SUBUNIT METHYLTRANSFERASE J"/>
    <property type="match status" value="1"/>
</dbReference>
<dbReference type="PANTHER" id="PTHR36112:SF1">
    <property type="entry name" value="RIBOSOMAL RNA SMALL SUBUNIT METHYLTRANSFERASE J"/>
    <property type="match status" value="1"/>
</dbReference>
<dbReference type="Pfam" id="PF04445">
    <property type="entry name" value="SAM_MT"/>
    <property type="match status" value="1"/>
</dbReference>
<dbReference type="SUPFAM" id="SSF53335">
    <property type="entry name" value="S-adenosyl-L-methionine-dependent methyltransferases"/>
    <property type="match status" value="1"/>
</dbReference>